<accession>Q3B1H3</accession>
<reference key="1">
    <citation type="submission" date="2005-08" db="EMBL/GenBank/DDBJ databases">
        <title>Complete sequence of Pelodictyon luteolum DSM 273.</title>
        <authorList>
            <consortium name="US DOE Joint Genome Institute"/>
            <person name="Copeland A."/>
            <person name="Lucas S."/>
            <person name="Lapidus A."/>
            <person name="Barry K."/>
            <person name="Detter J.C."/>
            <person name="Glavina T."/>
            <person name="Hammon N."/>
            <person name="Israni S."/>
            <person name="Pitluck S."/>
            <person name="Bryant D."/>
            <person name="Schmutz J."/>
            <person name="Larimer F."/>
            <person name="Land M."/>
            <person name="Kyrpides N."/>
            <person name="Ivanova N."/>
            <person name="Richardson P."/>
        </authorList>
    </citation>
    <scope>NUCLEOTIDE SEQUENCE [LARGE SCALE GENOMIC DNA]</scope>
    <source>
        <strain>DSM 273 / BCRC 81028 / 2530</strain>
    </source>
</reference>
<name>RL11_CHLL3</name>
<gene>
    <name evidence="1" type="primary">rplK</name>
    <name type="ordered locus">Plut_1966</name>
</gene>
<sequence>MAKKVIGFIKLQIPAGAANPAPPVGPALGQKGVNIMEFCKQFNAKTQSEAGMIIPVVITVFSDKSFTFITKTPPAAVLLLKEAKLQKGSGEPNRNKVGTVTREQVKKIAELKMPDLNAFDLRGAEEMIMGTARSMGIVVEG</sequence>
<organism>
    <name type="scientific">Chlorobium luteolum (strain DSM 273 / BCRC 81028 / 2530)</name>
    <name type="common">Pelodictyon luteolum</name>
    <dbReference type="NCBI Taxonomy" id="319225"/>
    <lineage>
        <taxon>Bacteria</taxon>
        <taxon>Pseudomonadati</taxon>
        <taxon>Chlorobiota</taxon>
        <taxon>Chlorobiia</taxon>
        <taxon>Chlorobiales</taxon>
        <taxon>Chlorobiaceae</taxon>
        <taxon>Chlorobium/Pelodictyon group</taxon>
        <taxon>Pelodictyon</taxon>
    </lineage>
</organism>
<evidence type="ECO:0000255" key="1">
    <source>
        <dbReference type="HAMAP-Rule" id="MF_00736"/>
    </source>
</evidence>
<evidence type="ECO:0000305" key="2"/>
<dbReference type="EMBL" id="CP000096">
    <property type="protein sequence ID" value="ABB24808.1"/>
    <property type="molecule type" value="Genomic_DNA"/>
</dbReference>
<dbReference type="RefSeq" id="WP_011358678.1">
    <property type="nucleotide sequence ID" value="NC_007512.1"/>
</dbReference>
<dbReference type="SMR" id="Q3B1H3"/>
<dbReference type="STRING" id="319225.Plut_1966"/>
<dbReference type="KEGG" id="plt:Plut_1966"/>
<dbReference type="eggNOG" id="COG0080">
    <property type="taxonomic scope" value="Bacteria"/>
</dbReference>
<dbReference type="HOGENOM" id="CLU_074237_2_1_10"/>
<dbReference type="OrthoDB" id="9802408at2"/>
<dbReference type="Proteomes" id="UP000002709">
    <property type="component" value="Chromosome"/>
</dbReference>
<dbReference type="GO" id="GO:0022625">
    <property type="term" value="C:cytosolic large ribosomal subunit"/>
    <property type="evidence" value="ECO:0007669"/>
    <property type="project" value="TreeGrafter"/>
</dbReference>
<dbReference type="GO" id="GO:0070180">
    <property type="term" value="F:large ribosomal subunit rRNA binding"/>
    <property type="evidence" value="ECO:0007669"/>
    <property type="project" value="UniProtKB-UniRule"/>
</dbReference>
<dbReference type="GO" id="GO:0003735">
    <property type="term" value="F:structural constituent of ribosome"/>
    <property type="evidence" value="ECO:0007669"/>
    <property type="project" value="InterPro"/>
</dbReference>
<dbReference type="GO" id="GO:0006412">
    <property type="term" value="P:translation"/>
    <property type="evidence" value="ECO:0007669"/>
    <property type="project" value="UniProtKB-UniRule"/>
</dbReference>
<dbReference type="CDD" id="cd00349">
    <property type="entry name" value="Ribosomal_L11"/>
    <property type="match status" value="1"/>
</dbReference>
<dbReference type="FunFam" id="1.10.10.250:FF:000001">
    <property type="entry name" value="50S ribosomal protein L11"/>
    <property type="match status" value="1"/>
</dbReference>
<dbReference type="FunFam" id="3.30.1550.10:FF:000001">
    <property type="entry name" value="50S ribosomal protein L11"/>
    <property type="match status" value="1"/>
</dbReference>
<dbReference type="Gene3D" id="1.10.10.250">
    <property type="entry name" value="Ribosomal protein L11, C-terminal domain"/>
    <property type="match status" value="1"/>
</dbReference>
<dbReference type="Gene3D" id="3.30.1550.10">
    <property type="entry name" value="Ribosomal protein L11/L12, N-terminal domain"/>
    <property type="match status" value="1"/>
</dbReference>
<dbReference type="HAMAP" id="MF_00736">
    <property type="entry name" value="Ribosomal_uL11"/>
    <property type="match status" value="1"/>
</dbReference>
<dbReference type="InterPro" id="IPR000911">
    <property type="entry name" value="Ribosomal_uL11"/>
</dbReference>
<dbReference type="InterPro" id="IPR006519">
    <property type="entry name" value="Ribosomal_uL11_bac-typ"/>
</dbReference>
<dbReference type="InterPro" id="IPR020783">
    <property type="entry name" value="Ribosomal_uL11_C"/>
</dbReference>
<dbReference type="InterPro" id="IPR036769">
    <property type="entry name" value="Ribosomal_uL11_C_sf"/>
</dbReference>
<dbReference type="InterPro" id="IPR020784">
    <property type="entry name" value="Ribosomal_uL11_N"/>
</dbReference>
<dbReference type="InterPro" id="IPR036796">
    <property type="entry name" value="Ribosomal_uL11_N_sf"/>
</dbReference>
<dbReference type="NCBIfam" id="TIGR01632">
    <property type="entry name" value="L11_bact"/>
    <property type="match status" value="1"/>
</dbReference>
<dbReference type="PANTHER" id="PTHR11661">
    <property type="entry name" value="60S RIBOSOMAL PROTEIN L12"/>
    <property type="match status" value="1"/>
</dbReference>
<dbReference type="PANTHER" id="PTHR11661:SF1">
    <property type="entry name" value="LARGE RIBOSOMAL SUBUNIT PROTEIN UL11M"/>
    <property type="match status" value="1"/>
</dbReference>
<dbReference type="Pfam" id="PF00298">
    <property type="entry name" value="Ribosomal_L11"/>
    <property type="match status" value="1"/>
</dbReference>
<dbReference type="Pfam" id="PF03946">
    <property type="entry name" value="Ribosomal_L11_N"/>
    <property type="match status" value="1"/>
</dbReference>
<dbReference type="SMART" id="SM00649">
    <property type="entry name" value="RL11"/>
    <property type="match status" value="1"/>
</dbReference>
<dbReference type="SUPFAM" id="SSF54747">
    <property type="entry name" value="Ribosomal L11/L12e N-terminal domain"/>
    <property type="match status" value="1"/>
</dbReference>
<dbReference type="SUPFAM" id="SSF46906">
    <property type="entry name" value="Ribosomal protein L11, C-terminal domain"/>
    <property type="match status" value="1"/>
</dbReference>
<protein>
    <recommendedName>
        <fullName evidence="1">Large ribosomal subunit protein uL11</fullName>
    </recommendedName>
    <alternativeName>
        <fullName evidence="2">50S ribosomal protein L11</fullName>
    </alternativeName>
</protein>
<comment type="function">
    <text evidence="1">Forms part of the ribosomal stalk which helps the ribosome interact with GTP-bound translation factors.</text>
</comment>
<comment type="subunit">
    <text evidence="1">Part of the ribosomal stalk of the 50S ribosomal subunit. Interacts with L10 and the large rRNA to form the base of the stalk. L10 forms an elongated spine to which L12 dimers bind in a sequential fashion forming a multimeric L10(L12)X complex.</text>
</comment>
<comment type="PTM">
    <text evidence="1">One or more lysine residues are methylated.</text>
</comment>
<comment type="similarity">
    <text evidence="1">Belongs to the universal ribosomal protein uL11 family.</text>
</comment>
<feature type="chain" id="PRO_0000258182" description="Large ribosomal subunit protein uL11">
    <location>
        <begin position="1"/>
        <end position="141"/>
    </location>
</feature>
<proteinExistence type="inferred from homology"/>
<keyword id="KW-0488">Methylation</keyword>
<keyword id="KW-1185">Reference proteome</keyword>
<keyword id="KW-0687">Ribonucleoprotein</keyword>
<keyword id="KW-0689">Ribosomal protein</keyword>
<keyword id="KW-0694">RNA-binding</keyword>
<keyword id="KW-0699">rRNA-binding</keyword>